<keyword id="KW-0009">Actin-binding</keyword>
<keyword id="KW-0025">Alternative splicing</keyword>
<keyword id="KW-0175">Coiled coil</keyword>
<keyword id="KW-0963">Cytoplasm</keyword>
<keyword id="KW-0206">Cytoskeleton</keyword>
<keyword id="KW-0514">Muscle protein</keyword>
<keyword id="KW-1185">Reference proteome</keyword>
<gene>
    <name type="primary">tpm1</name>
</gene>
<sequence>MDAIKKKMQMLKLDKENALDRAEQAEADKKGAEDKSKQLEDELVALQKKLKGTEDELDKYSEALKDAQEKLELSDKKATDAEGDVASLNRRIQLVEEELDRAQERLSTALQKLEEAEKAADESERGMKVIENRALKDEEKMELQEIQLKEAKHIAEEADRKYEEVARKLVIIEGDLERAEERAELSESKCAELEEELKTVTNNLKSLEAQAEKYSQKEDKYEEEIKVLTDKLKEAETRAEFAERTVAKLEKSIDDLEDELYAQKLKYKAISEELDHALNDMTSI</sequence>
<reference key="1">
    <citation type="journal article" date="1991" name="Eur. J. Biochem.">
        <title>Characterization of muscle and non muscle Xenopus laevis tropomyosin mRNAs transcribed from the same gene. Developmental and tissue-specific expression.</title>
        <authorList>
            <person name="Hardy S."/>
            <person name="Fishman M."/>
            <person name="Obsorne H.B."/>
            <person name="Thiebaud P."/>
        </authorList>
    </citation>
    <scope>NUCLEOTIDE SEQUENCE [MRNA] (ISOFORMS 1 AND 2)</scope>
    <source>
        <tissue>Embryo</tissue>
        <tissue>Oocyte</tissue>
    </source>
</reference>
<protein>
    <recommendedName>
        <fullName>Tropomyosin alpha-1 chain</fullName>
    </recommendedName>
    <alternativeName>
        <fullName>Alpha-tropomyosin</fullName>
    </alternativeName>
    <alternativeName>
        <fullName>Tropomyosin-1</fullName>
    </alternativeName>
</protein>
<dbReference type="EMBL" id="X61273">
    <property type="protein sequence ID" value="CAA43577.1"/>
    <property type="molecule type" value="mRNA"/>
</dbReference>
<dbReference type="EMBL" id="X61272">
    <property type="protein sequence ID" value="CAA43576.1"/>
    <property type="molecule type" value="mRNA"/>
</dbReference>
<dbReference type="PIR" id="S19690">
    <property type="entry name" value="S19690"/>
</dbReference>
<dbReference type="PIR" id="S19691">
    <property type="entry name" value="S19691"/>
</dbReference>
<dbReference type="RefSeq" id="NP_001128548.1">
    <molecule id="Q01173-1"/>
    <property type="nucleotide sequence ID" value="NM_001135076.1"/>
</dbReference>
<dbReference type="SMR" id="Q01173"/>
<dbReference type="BioGRID" id="932828">
    <property type="interactions" value="3"/>
</dbReference>
<dbReference type="DNASU" id="100189579"/>
<dbReference type="GeneID" id="100189579"/>
<dbReference type="KEGG" id="xla:100189579"/>
<dbReference type="AGR" id="Xenbase:XB-GENE-865564"/>
<dbReference type="CTD" id="100189579"/>
<dbReference type="Xenbase" id="XB-GENE-865564">
    <property type="gene designation" value="tpm1.L"/>
</dbReference>
<dbReference type="OrthoDB" id="128924at2759"/>
<dbReference type="CD-CODE" id="78E86D56">
    <property type="entry name" value="Mitochondrial cloud"/>
</dbReference>
<dbReference type="Proteomes" id="UP000186698">
    <property type="component" value="Chromosome 3L"/>
</dbReference>
<dbReference type="Bgee" id="100189579">
    <property type="expression patterns" value="Expressed in heart and 19 other cell types or tissues"/>
</dbReference>
<dbReference type="GO" id="GO:0015629">
    <property type="term" value="C:actin cytoskeleton"/>
    <property type="evidence" value="ECO:0000250"/>
    <property type="project" value="UniProtKB"/>
</dbReference>
<dbReference type="GO" id="GO:0005884">
    <property type="term" value="C:actin filament"/>
    <property type="evidence" value="ECO:0000318"/>
    <property type="project" value="GO_Central"/>
</dbReference>
<dbReference type="GO" id="GO:0005737">
    <property type="term" value="C:cytoplasm"/>
    <property type="evidence" value="ECO:0007669"/>
    <property type="project" value="UniProtKB-KW"/>
</dbReference>
<dbReference type="GO" id="GO:0051015">
    <property type="term" value="F:actin filament binding"/>
    <property type="evidence" value="ECO:0000250"/>
    <property type="project" value="UniProtKB"/>
</dbReference>
<dbReference type="GO" id="GO:0042802">
    <property type="term" value="F:identical protein binding"/>
    <property type="evidence" value="ECO:0000250"/>
    <property type="project" value="UniProtKB"/>
</dbReference>
<dbReference type="GO" id="GO:0046982">
    <property type="term" value="F:protein heterodimerization activity"/>
    <property type="evidence" value="ECO:0000250"/>
    <property type="project" value="UniProtKB"/>
</dbReference>
<dbReference type="GO" id="GO:0042803">
    <property type="term" value="F:protein homodimerization activity"/>
    <property type="evidence" value="ECO:0000250"/>
    <property type="project" value="UniProtKB"/>
</dbReference>
<dbReference type="GO" id="GO:0007015">
    <property type="term" value="P:actin filament organization"/>
    <property type="evidence" value="ECO:0000318"/>
    <property type="project" value="GO_Central"/>
</dbReference>
<dbReference type="GO" id="GO:0060048">
    <property type="term" value="P:cardiac muscle contraction"/>
    <property type="evidence" value="ECO:0000318"/>
    <property type="project" value="GO_Central"/>
</dbReference>
<dbReference type="FunFam" id="1.20.5.1160:FF:000013">
    <property type="entry name" value="Tropomyosin 1 (alpha)"/>
    <property type="match status" value="1"/>
</dbReference>
<dbReference type="FunFam" id="1.20.5.170:FF:000005">
    <property type="entry name" value="Tropomyosin alpha-1 chain"/>
    <property type="match status" value="1"/>
</dbReference>
<dbReference type="FunFam" id="1.20.5.170:FF:000001">
    <property type="entry name" value="Tropomyosin alpha-1 chain isoform 1"/>
    <property type="match status" value="1"/>
</dbReference>
<dbReference type="FunFam" id="1.20.5.340:FF:000001">
    <property type="entry name" value="Tropomyosin alpha-1 chain isoform 2"/>
    <property type="match status" value="1"/>
</dbReference>
<dbReference type="Gene3D" id="1.20.5.170">
    <property type="match status" value="2"/>
</dbReference>
<dbReference type="Gene3D" id="1.20.5.340">
    <property type="match status" value="1"/>
</dbReference>
<dbReference type="InterPro" id="IPR000533">
    <property type="entry name" value="Tropomyosin"/>
</dbReference>
<dbReference type="PANTHER" id="PTHR19269">
    <property type="entry name" value="TROPOMYOSIN"/>
    <property type="match status" value="1"/>
</dbReference>
<dbReference type="Pfam" id="PF00261">
    <property type="entry name" value="Tropomyosin"/>
    <property type="match status" value="1"/>
</dbReference>
<dbReference type="PRINTS" id="PR00194">
    <property type="entry name" value="TROPOMYOSIN"/>
</dbReference>
<dbReference type="SUPFAM" id="SSF57997">
    <property type="entry name" value="Tropomyosin"/>
    <property type="match status" value="1"/>
</dbReference>
<dbReference type="PROSITE" id="PS00326">
    <property type="entry name" value="TROPOMYOSIN"/>
    <property type="match status" value="1"/>
</dbReference>
<accession>Q01173</accession>
<accession>Q01174</accession>
<feature type="chain" id="PRO_0000205642" description="Tropomyosin alpha-1 chain">
    <location>
        <begin position="1"/>
        <end position="284"/>
    </location>
</feature>
<feature type="region of interest" description="Disordered" evidence="4">
    <location>
        <begin position="1"/>
        <end position="38"/>
    </location>
</feature>
<feature type="coiled-coil region" evidence="1">
    <location>
        <begin position="1"/>
        <end position="284"/>
    </location>
</feature>
<feature type="compositionally biased region" description="Basic and acidic residues" evidence="4">
    <location>
        <begin position="12"/>
        <end position="38"/>
    </location>
</feature>
<feature type="splice variant" id="VSP_006612" description="In isoform 2." evidence="5">
    <original>MDAIKKKMQMLKLDKENALDRAEQAEADKKGAEDKSKQLEDELVALQKKLKGTEDELDKYSEALKDAQEKLELSDKKATD</original>
    <variation>MAGITSLEAVKRKIKCLQDQADEAEERAEKLQRERDMERKLREA</variation>
    <location>
        <begin position="1"/>
        <end position="80"/>
    </location>
</feature>
<feature type="splice variant" id="VSP_006613" description="In isoform 2." evidence="5">
    <original>KCAELEEELKTVTNNLKSLEAQA</original>
    <variation>HYRQLEDQQRIMDQTLKTLIASE</variation>
    <location>
        <begin position="189"/>
        <end position="211"/>
    </location>
</feature>
<feature type="splice variant" id="VSP_006614" description="In isoform 2." evidence="5">
    <original>DELYAQKLKYKAISEELDHALNDMTSI</original>
    <variation>EKVAHAKEENLNMHQMLDQTLLELNNM</variation>
    <location>
        <begin position="258"/>
        <end position="284"/>
    </location>
</feature>
<name>TPM1_XENLA</name>
<evidence type="ECO:0000250" key="1"/>
<evidence type="ECO:0000250" key="2">
    <source>
        <dbReference type="UniProtKB" id="P04692"/>
    </source>
</evidence>
<evidence type="ECO:0000250" key="3">
    <source>
        <dbReference type="UniProtKB" id="P09493"/>
    </source>
</evidence>
<evidence type="ECO:0000256" key="4">
    <source>
        <dbReference type="SAM" id="MobiDB-lite"/>
    </source>
</evidence>
<evidence type="ECO:0000303" key="5">
    <source>
    </source>
</evidence>
<evidence type="ECO:0000305" key="6"/>
<proteinExistence type="evidence at transcript level"/>
<organism>
    <name type="scientific">Xenopus laevis</name>
    <name type="common">African clawed frog</name>
    <dbReference type="NCBI Taxonomy" id="8355"/>
    <lineage>
        <taxon>Eukaryota</taxon>
        <taxon>Metazoa</taxon>
        <taxon>Chordata</taxon>
        <taxon>Craniata</taxon>
        <taxon>Vertebrata</taxon>
        <taxon>Euteleostomi</taxon>
        <taxon>Amphibia</taxon>
        <taxon>Batrachia</taxon>
        <taxon>Anura</taxon>
        <taxon>Pipoidea</taxon>
        <taxon>Pipidae</taxon>
        <taxon>Xenopodinae</taxon>
        <taxon>Xenopus</taxon>
        <taxon>Xenopus</taxon>
    </lineage>
</organism>
<comment type="function">
    <text evidence="3">Binds to actin filaments in muscle and non-muscle cells. Plays a central role, in association with the troponin complex, in the calcium dependent regulation of vertebrate striated muscle contraction. Smooth muscle contraction is regulated by interaction with caldesmon. In non-muscle cells is implicated in stabilizing cytoskeleton actin filaments.</text>
</comment>
<comment type="subunit">
    <text evidence="2">Homodimer. Heterodimer of an alpha (TPM1, TPM3 or TPM4) and a beta (TPM2) chain.</text>
</comment>
<comment type="subcellular location">
    <subcellularLocation>
        <location evidence="2">Cytoplasm</location>
        <location evidence="2">Cytoskeleton</location>
    </subcellularLocation>
    <text evidence="2">Associates with F-actin stress fibers.</text>
</comment>
<comment type="alternative products">
    <event type="alternative splicing"/>
    <isoform>
        <id>Q01173-1</id>
        <name>1</name>
        <name>Muscle</name>
        <sequence type="displayed"/>
    </isoform>
    <isoform>
        <id>Q01173-2</id>
        <name>2</name>
        <name>non-muscle</name>
        <sequence type="described" ref="VSP_006612 VSP_006613 VSP_006614"/>
    </isoform>
</comment>
<comment type="domain">
    <text>The molecule is in a coiled coil structure that is formed by 2 polypeptide chains. The sequence exhibits a prominent seven-residues periodicity.</text>
</comment>
<comment type="similarity">
    <text evidence="6">Belongs to the tropomyosin family.</text>
</comment>